<reference key="1">
    <citation type="journal article" date="2002" name="Nucleic Acids Res.">
        <title>Genome sequence of Shigella flexneri 2a: insights into pathogenicity through comparison with genomes of Escherichia coli K12 and O157.</title>
        <authorList>
            <person name="Jin Q."/>
            <person name="Yuan Z."/>
            <person name="Xu J."/>
            <person name="Wang Y."/>
            <person name="Shen Y."/>
            <person name="Lu W."/>
            <person name="Wang J."/>
            <person name="Liu H."/>
            <person name="Yang J."/>
            <person name="Yang F."/>
            <person name="Zhang X."/>
            <person name="Zhang J."/>
            <person name="Yang G."/>
            <person name="Wu H."/>
            <person name="Qu D."/>
            <person name="Dong J."/>
            <person name="Sun L."/>
            <person name="Xue Y."/>
            <person name="Zhao A."/>
            <person name="Gao Y."/>
            <person name="Zhu J."/>
            <person name="Kan B."/>
            <person name="Ding K."/>
            <person name="Chen S."/>
            <person name="Cheng H."/>
            <person name="Yao Z."/>
            <person name="He B."/>
            <person name="Chen R."/>
            <person name="Ma D."/>
            <person name="Qiang B."/>
            <person name="Wen Y."/>
            <person name="Hou Y."/>
            <person name="Yu J."/>
        </authorList>
    </citation>
    <scope>NUCLEOTIDE SEQUENCE [LARGE SCALE GENOMIC DNA]</scope>
    <source>
        <strain>301 / Serotype 2a</strain>
    </source>
</reference>
<reference key="2">
    <citation type="journal article" date="2003" name="Infect. Immun.">
        <title>Complete genome sequence and comparative genomics of Shigella flexneri serotype 2a strain 2457T.</title>
        <authorList>
            <person name="Wei J."/>
            <person name="Goldberg M.B."/>
            <person name="Burland V."/>
            <person name="Venkatesan M.M."/>
            <person name="Deng W."/>
            <person name="Fournier G."/>
            <person name="Mayhew G.F."/>
            <person name="Plunkett G. III"/>
            <person name="Rose D.J."/>
            <person name="Darling A."/>
            <person name="Mau B."/>
            <person name="Perna N.T."/>
            <person name="Payne S.M."/>
            <person name="Runyen-Janecky L.J."/>
            <person name="Zhou S."/>
            <person name="Schwartz D.C."/>
            <person name="Blattner F.R."/>
        </authorList>
    </citation>
    <scope>NUCLEOTIDE SEQUENCE [LARGE SCALE GENOMIC DNA]</scope>
    <source>
        <strain>ATCC 700930 / 2457T / Serotype 2a</strain>
    </source>
</reference>
<sequence>MTVLHSVDFFPSCNASVAIEPRLPQADFPEHHHDFHEIVIVEHGTGIHVFNGQPYTITGGTVCFVRDHDRHLYEHTDNLCLTNVLYRSPDRFQFLAGLNQLLPQELDGQYPSHWRVNHSVLQQVRQLVAQMEQQEGENDLPSTASREILFMQLLLLLRKSSLQENLENSASRLNLLLAWLEDHFADEVNWDAVADQFSLSLRTLHRQLKQQTGLTPQRYLNRLRLMKARHLLRHSEASVTDIAYRCGFSDSNHFSTLFRREFNWSPRDIRQGRDGFLQ</sequence>
<comment type="function">
    <text evidence="1">Activates expression of the rhaBAD and rhaT operons.</text>
</comment>
<comment type="subunit">
    <text evidence="1">Binds DNA as a dimer.</text>
</comment>
<comment type="subcellular location">
    <subcellularLocation>
        <location evidence="1">Cytoplasm</location>
    </subcellularLocation>
</comment>
<dbReference type="EMBL" id="AE005674">
    <property type="protein sequence ID" value="AAN45416.1"/>
    <property type="molecule type" value="Genomic_DNA"/>
</dbReference>
<dbReference type="EMBL" id="AE014073">
    <property type="protein sequence ID" value="AAP18783.1"/>
    <property type="molecule type" value="Genomic_DNA"/>
</dbReference>
<dbReference type="RefSeq" id="NP_709709.1">
    <property type="nucleotide sequence ID" value="NC_004337.2"/>
</dbReference>
<dbReference type="RefSeq" id="WP_000217105.1">
    <property type="nucleotide sequence ID" value="NZ_WPGW01000095.1"/>
</dbReference>
<dbReference type="SMR" id="Q83PE0"/>
<dbReference type="STRING" id="198214.SF3982"/>
<dbReference type="PaxDb" id="198214-SF3982"/>
<dbReference type="GeneID" id="1027382"/>
<dbReference type="KEGG" id="sfl:SF3982"/>
<dbReference type="KEGG" id="sfx:S3766"/>
<dbReference type="PATRIC" id="fig|198214.7.peg.4692"/>
<dbReference type="HOGENOM" id="CLU_000445_88_5_6"/>
<dbReference type="Proteomes" id="UP000001006">
    <property type="component" value="Chromosome"/>
</dbReference>
<dbReference type="Proteomes" id="UP000002673">
    <property type="component" value="Chromosome"/>
</dbReference>
<dbReference type="GO" id="GO:0005737">
    <property type="term" value="C:cytoplasm"/>
    <property type="evidence" value="ECO:0007669"/>
    <property type="project" value="UniProtKB-SubCell"/>
</dbReference>
<dbReference type="GO" id="GO:0003700">
    <property type="term" value="F:DNA-binding transcription factor activity"/>
    <property type="evidence" value="ECO:0007669"/>
    <property type="project" value="UniProtKB-UniRule"/>
</dbReference>
<dbReference type="GO" id="GO:0043565">
    <property type="term" value="F:sequence-specific DNA binding"/>
    <property type="evidence" value="ECO:0007669"/>
    <property type="project" value="InterPro"/>
</dbReference>
<dbReference type="GO" id="GO:0045893">
    <property type="term" value="P:positive regulation of DNA-templated transcription"/>
    <property type="evidence" value="ECO:0007669"/>
    <property type="project" value="UniProtKB-UniRule"/>
</dbReference>
<dbReference type="GO" id="GO:0019299">
    <property type="term" value="P:rhamnose metabolic process"/>
    <property type="evidence" value="ECO:0007669"/>
    <property type="project" value="UniProtKB-UniRule"/>
</dbReference>
<dbReference type="CDD" id="cd06977">
    <property type="entry name" value="cupin_RhaR_RhaS-like_N"/>
    <property type="match status" value="1"/>
</dbReference>
<dbReference type="FunFam" id="1.10.10.60:FF:000181">
    <property type="entry name" value="HTH-type transcriptional activator RhaS"/>
    <property type="match status" value="1"/>
</dbReference>
<dbReference type="Gene3D" id="1.10.10.60">
    <property type="entry name" value="Homeodomain-like"/>
    <property type="match status" value="1"/>
</dbReference>
<dbReference type="Gene3D" id="2.60.120.10">
    <property type="entry name" value="Jelly Rolls"/>
    <property type="match status" value="1"/>
</dbReference>
<dbReference type="HAMAP" id="MF_01534">
    <property type="entry name" value="HTH_type_RhaS"/>
    <property type="match status" value="1"/>
</dbReference>
<dbReference type="InterPro" id="IPR003313">
    <property type="entry name" value="AraC-bd"/>
</dbReference>
<dbReference type="InterPro" id="IPR050204">
    <property type="entry name" value="AraC_XylS_family_regulators"/>
</dbReference>
<dbReference type="InterPro" id="IPR009057">
    <property type="entry name" value="Homeodomain-like_sf"/>
</dbReference>
<dbReference type="InterPro" id="IPR037923">
    <property type="entry name" value="HTH-like"/>
</dbReference>
<dbReference type="InterPro" id="IPR018060">
    <property type="entry name" value="HTH_AraC"/>
</dbReference>
<dbReference type="InterPro" id="IPR018062">
    <property type="entry name" value="HTH_AraC-typ_CS"/>
</dbReference>
<dbReference type="InterPro" id="IPR047220">
    <property type="entry name" value="RhaR_RhaS-like_N"/>
</dbReference>
<dbReference type="InterPro" id="IPR014710">
    <property type="entry name" value="RmlC-like_jellyroll"/>
</dbReference>
<dbReference type="InterPro" id="IPR020449">
    <property type="entry name" value="Tscrpt_reg_AraC-type_HTH"/>
</dbReference>
<dbReference type="InterPro" id="IPR023609">
    <property type="entry name" value="Tscrpt_reg_HTH_RhaS"/>
</dbReference>
<dbReference type="NCBIfam" id="NF010028">
    <property type="entry name" value="PRK13503.1"/>
    <property type="match status" value="1"/>
</dbReference>
<dbReference type="PANTHER" id="PTHR46796:SF13">
    <property type="entry name" value="HTH-TYPE TRANSCRIPTIONAL ACTIVATOR RHAS"/>
    <property type="match status" value="1"/>
</dbReference>
<dbReference type="PANTHER" id="PTHR46796">
    <property type="entry name" value="HTH-TYPE TRANSCRIPTIONAL ACTIVATOR RHAS-RELATED"/>
    <property type="match status" value="1"/>
</dbReference>
<dbReference type="Pfam" id="PF02311">
    <property type="entry name" value="AraC_binding"/>
    <property type="match status" value="1"/>
</dbReference>
<dbReference type="Pfam" id="PF12833">
    <property type="entry name" value="HTH_18"/>
    <property type="match status" value="1"/>
</dbReference>
<dbReference type="PRINTS" id="PR00032">
    <property type="entry name" value="HTHARAC"/>
</dbReference>
<dbReference type="SMART" id="SM00342">
    <property type="entry name" value="HTH_ARAC"/>
    <property type="match status" value="1"/>
</dbReference>
<dbReference type="SUPFAM" id="SSF46689">
    <property type="entry name" value="Homeodomain-like"/>
    <property type="match status" value="2"/>
</dbReference>
<dbReference type="SUPFAM" id="SSF51215">
    <property type="entry name" value="Regulatory protein AraC"/>
    <property type="match status" value="1"/>
</dbReference>
<dbReference type="PROSITE" id="PS00041">
    <property type="entry name" value="HTH_ARAC_FAMILY_1"/>
    <property type="match status" value="1"/>
</dbReference>
<dbReference type="PROSITE" id="PS01124">
    <property type="entry name" value="HTH_ARAC_FAMILY_2"/>
    <property type="match status" value="1"/>
</dbReference>
<organism>
    <name type="scientific">Shigella flexneri</name>
    <dbReference type="NCBI Taxonomy" id="623"/>
    <lineage>
        <taxon>Bacteria</taxon>
        <taxon>Pseudomonadati</taxon>
        <taxon>Pseudomonadota</taxon>
        <taxon>Gammaproteobacteria</taxon>
        <taxon>Enterobacterales</taxon>
        <taxon>Enterobacteriaceae</taxon>
        <taxon>Shigella</taxon>
    </lineage>
</organism>
<evidence type="ECO:0000255" key="1">
    <source>
        <dbReference type="HAMAP-Rule" id="MF_01534"/>
    </source>
</evidence>
<gene>
    <name evidence="1" type="primary">rhaS</name>
    <name type="ordered locus">SF3982</name>
    <name type="ordered locus">S3766</name>
</gene>
<name>RHAS_SHIFL</name>
<feature type="chain" id="PRO_0000194572" description="HTH-type transcriptional activator RhaS">
    <location>
        <begin position="1"/>
        <end position="278"/>
    </location>
</feature>
<feature type="domain" description="HTH araC/xylS-type" evidence="1">
    <location>
        <begin position="174"/>
        <end position="272"/>
    </location>
</feature>
<feature type="DNA-binding region" description="H-T-H motif" evidence="1">
    <location>
        <begin position="191"/>
        <end position="212"/>
    </location>
</feature>
<feature type="DNA-binding region" description="H-T-H motif" evidence="1">
    <location>
        <begin position="239"/>
        <end position="262"/>
    </location>
</feature>
<feature type="site" description="Interaction with sigma-70" evidence="1">
    <location>
        <position position="241"/>
    </location>
</feature>
<feature type="site" description="Interaction with sigma-70" evidence="1">
    <location>
        <position position="250"/>
    </location>
</feature>
<protein>
    <recommendedName>
        <fullName evidence="1">HTH-type transcriptional activator RhaS</fullName>
    </recommendedName>
    <alternativeName>
        <fullName evidence="1">L-rhamnose operon regulatory protein RhaS</fullName>
    </alternativeName>
</protein>
<accession>Q83PE0</accession>
<accession>Q7BZF3</accession>
<proteinExistence type="inferred from homology"/>
<keyword id="KW-0010">Activator</keyword>
<keyword id="KW-0963">Cytoplasm</keyword>
<keyword id="KW-0238">DNA-binding</keyword>
<keyword id="KW-1185">Reference proteome</keyword>
<keyword id="KW-0677">Repeat</keyword>
<keyword id="KW-0684">Rhamnose metabolism</keyword>
<keyword id="KW-0804">Transcription</keyword>
<keyword id="KW-0805">Transcription regulation</keyword>